<dbReference type="EMBL" id="Y18346">
    <property type="protein sequence ID" value="CAA77130.1"/>
    <property type="molecule type" value="mRNA"/>
</dbReference>
<dbReference type="SMR" id="Q9ZR41"/>
<dbReference type="FunCoup" id="Q9ZR41">
    <property type="interactions" value="1041"/>
</dbReference>
<dbReference type="STRING" id="4081.Q9ZR41"/>
<dbReference type="PaxDb" id="4081-Solyc06g005260.2.1"/>
<dbReference type="ProMEX" id="Q9ZR41"/>
<dbReference type="eggNOG" id="KOG1752">
    <property type="taxonomic scope" value="Eukaryota"/>
</dbReference>
<dbReference type="InParanoid" id="Q9ZR41"/>
<dbReference type="Proteomes" id="UP000004994">
    <property type="component" value="Unplaced"/>
</dbReference>
<dbReference type="ExpressionAtlas" id="Q9ZR41">
    <property type="expression patterns" value="baseline and differential"/>
</dbReference>
<dbReference type="GO" id="GO:0005737">
    <property type="term" value="C:cytoplasm"/>
    <property type="evidence" value="ECO:0000318"/>
    <property type="project" value="GO_Central"/>
</dbReference>
<dbReference type="GO" id="GO:0015038">
    <property type="term" value="F:glutathione disulfide oxidoreductase activity"/>
    <property type="evidence" value="ECO:0000318"/>
    <property type="project" value="GO_Central"/>
</dbReference>
<dbReference type="GO" id="GO:0034599">
    <property type="term" value="P:cellular response to oxidative stress"/>
    <property type="evidence" value="ECO:0000318"/>
    <property type="project" value="GO_Central"/>
</dbReference>
<dbReference type="CDD" id="cd03419">
    <property type="entry name" value="GRX_GRXh_1_2_like"/>
    <property type="match status" value="1"/>
</dbReference>
<dbReference type="FunFam" id="3.40.30.10:FF:000093">
    <property type="entry name" value="Glutaredoxin 2"/>
    <property type="match status" value="1"/>
</dbReference>
<dbReference type="Gene3D" id="3.40.30.10">
    <property type="entry name" value="Glutaredoxin"/>
    <property type="match status" value="1"/>
</dbReference>
<dbReference type="InterPro" id="IPR011767">
    <property type="entry name" value="GLR_AS"/>
</dbReference>
<dbReference type="InterPro" id="IPR002109">
    <property type="entry name" value="Glutaredoxin"/>
</dbReference>
<dbReference type="InterPro" id="IPR011899">
    <property type="entry name" value="Glutaredoxin_euk/vir"/>
</dbReference>
<dbReference type="InterPro" id="IPR014025">
    <property type="entry name" value="Glutaredoxin_subgr"/>
</dbReference>
<dbReference type="InterPro" id="IPR036249">
    <property type="entry name" value="Thioredoxin-like_sf"/>
</dbReference>
<dbReference type="NCBIfam" id="TIGR02180">
    <property type="entry name" value="GRX_euk"/>
    <property type="match status" value="1"/>
</dbReference>
<dbReference type="PANTHER" id="PTHR45694">
    <property type="entry name" value="GLUTAREDOXIN 2"/>
    <property type="match status" value="1"/>
</dbReference>
<dbReference type="PANTHER" id="PTHR45694:SF14">
    <property type="entry name" value="GLUTAREDOXIN-C2"/>
    <property type="match status" value="1"/>
</dbReference>
<dbReference type="Pfam" id="PF00462">
    <property type="entry name" value="Glutaredoxin"/>
    <property type="match status" value="1"/>
</dbReference>
<dbReference type="PRINTS" id="PR00160">
    <property type="entry name" value="GLUTAREDOXIN"/>
</dbReference>
<dbReference type="SUPFAM" id="SSF52833">
    <property type="entry name" value="Thioredoxin-like"/>
    <property type="match status" value="1"/>
</dbReference>
<dbReference type="PROSITE" id="PS00195">
    <property type="entry name" value="GLUTAREDOXIN_1"/>
    <property type="match status" value="1"/>
</dbReference>
<dbReference type="PROSITE" id="PS51354">
    <property type="entry name" value="GLUTAREDOXIN_2"/>
    <property type="match status" value="1"/>
</dbReference>
<reference key="1">
    <citation type="online journal article" date="1999" name="Plant Gene Register">
        <title>Isolation and characterization of a cDNA clone for glutaredoxin from tomato (Lycopersicon esculentum Mill.) developing fruits.</title>
        <authorList>
            <person name="Chevalier C."/>
            <person name="Joubes J."/>
            <person name="Petit J."/>
            <person name="Raymond P."/>
        </authorList>
        <locator>PGR99-001</locator>
    </citation>
    <scope>NUCLEOTIDE SEQUENCE [MRNA]</scope>
    <source>
        <strain>cv. West Virginia 106</strain>
        <tissue>Fruit</tissue>
    </source>
</reference>
<name>GLRX_SOLLC</name>
<organism>
    <name type="scientific">Solanum lycopersicum</name>
    <name type="common">Tomato</name>
    <name type="synonym">Lycopersicon esculentum</name>
    <dbReference type="NCBI Taxonomy" id="4081"/>
    <lineage>
        <taxon>Eukaryota</taxon>
        <taxon>Viridiplantae</taxon>
        <taxon>Streptophyta</taxon>
        <taxon>Embryophyta</taxon>
        <taxon>Tracheophyta</taxon>
        <taxon>Spermatophyta</taxon>
        <taxon>Magnoliopsida</taxon>
        <taxon>eudicotyledons</taxon>
        <taxon>Gunneridae</taxon>
        <taxon>Pentapetalae</taxon>
        <taxon>asterids</taxon>
        <taxon>lamiids</taxon>
        <taxon>Solanales</taxon>
        <taxon>Solanaceae</taxon>
        <taxon>Solanoideae</taxon>
        <taxon>Solaneae</taxon>
        <taxon>Solanum</taxon>
        <taxon>Solanum subgen. Lycopersicon</taxon>
    </lineage>
</organism>
<feature type="chain" id="PRO_0000141606" description="Glutaredoxin">
    <location>
        <begin position="1"/>
        <end position="108"/>
    </location>
</feature>
<feature type="domain" description="Glutaredoxin" evidence="2">
    <location>
        <begin position="3"/>
        <end position="103"/>
    </location>
</feature>
<feature type="disulfide bond" description="Redox-active" evidence="1">
    <location>
        <begin position="23"/>
        <end position="26"/>
    </location>
</feature>
<keyword id="KW-0963">Cytoplasm</keyword>
<keyword id="KW-1015">Disulfide bond</keyword>
<keyword id="KW-0249">Electron transport</keyword>
<keyword id="KW-0676">Redox-active center</keyword>
<keyword id="KW-1185">Reference proteome</keyword>
<keyword id="KW-0813">Transport</keyword>
<protein>
    <recommendedName>
        <fullName>Glutaredoxin</fullName>
    </recommendedName>
</protein>
<evidence type="ECO:0000250" key="1"/>
<evidence type="ECO:0000255" key="2">
    <source>
        <dbReference type="PROSITE-ProRule" id="PRU00686"/>
    </source>
</evidence>
<evidence type="ECO:0000305" key="3"/>
<comment type="function">
    <text evidence="1">Has a glutathione-disulfide oxidoreductase activity in the presence of NADPH and glutathione reductase. Reduces low molecular weight disulfides and proteins (By similarity).</text>
</comment>
<comment type="subcellular location">
    <subcellularLocation>
        <location evidence="1">Cytoplasm</location>
    </subcellularLocation>
</comment>
<comment type="similarity">
    <text evidence="3">Belongs to the glutaredoxin family. CPYC subfamily.</text>
</comment>
<proteinExistence type="inferred from homology"/>
<accession>Q9ZR41</accession>
<sequence>MSLAKAKEIVSGNPVAVFSKTYCPFCVSVKDLLSKLGATFKAVELDSEKDGSEIQAALAEWTGQRTVPNVFIGRKHIGGCDATTALHREGKLLPLLTEAGAIAKTSTA</sequence>